<name>OSBP2_MOUSE</name>
<organism>
    <name type="scientific">Mus musculus</name>
    <name type="common">Mouse</name>
    <dbReference type="NCBI Taxonomy" id="10090"/>
    <lineage>
        <taxon>Eukaryota</taxon>
        <taxon>Metazoa</taxon>
        <taxon>Chordata</taxon>
        <taxon>Craniata</taxon>
        <taxon>Vertebrata</taxon>
        <taxon>Euteleostomi</taxon>
        <taxon>Mammalia</taxon>
        <taxon>Eutheria</taxon>
        <taxon>Euarchontoglires</taxon>
        <taxon>Glires</taxon>
        <taxon>Rodentia</taxon>
        <taxon>Myomorpha</taxon>
        <taxon>Muroidea</taxon>
        <taxon>Muridae</taxon>
        <taxon>Murinae</taxon>
        <taxon>Mus</taxon>
        <taxon>Mus</taxon>
    </lineage>
</organism>
<keyword id="KW-0968">Cytoplasmic vesicle</keyword>
<keyword id="KW-0221">Differentiation</keyword>
<keyword id="KW-0445">Lipid transport</keyword>
<keyword id="KW-0446">Lipid-binding</keyword>
<keyword id="KW-0472">Membrane</keyword>
<keyword id="KW-0597">Phosphoprotein</keyword>
<keyword id="KW-1185">Reference proteome</keyword>
<keyword id="KW-0744">Spermatogenesis</keyword>
<keyword id="KW-0813">Transport</keyword>
<reference key="1">
    <citation type="journal article" date="2009" name="PLoS Biol.">
        <title>Lineage-specific biology revealed by a finished genome assembly of the mouse.</title>
        <authorList>
            <person name="Church D.M."/>
            <person name="Goodstadt L."/>
            <person name="Hillier L.W."/>
            <person name="Zody M.C."/>
            <person name="Goldstein S."/>
            <person name="She X."/>
            <person name="Bult C.J."/>
            <person name="Agarwala R."/>
            <person name="Cherry J.L."/>
            <person name="DiCuccio M."/>
            <person name="Hlavina W."/>
            <person name="Kapustin Y."/>
            <person name="Meric P."/>
            <person name="Maglott D."/>
            <person name="Birtle Z."/>
            <person name="Marques A.C."/>
            <person name="Graves T."/>
            <person name="Zhou S."/>
            <person name="Teague B."/>
            <person name="Potamousis K."/>
            <person name="Churas C."/>
            <person name="Place M."/>
            <person name="Herschleb J."/>
            <person name="Runnheim R."/>
            <person name="Forrest D."/>
            <person name="Amos-Landgraf J."/>
            <person name="Schwartz D.C."/>
            <person name="Cheng Z."/>
            <person name="Lindblad-Toh K."/>
            <person name="Eichler E.E."/>
            <person name="Ponting C.P."/>
        </authorList>
    </citation>
    <scope>NUCLEOTIDE SEQUENCE [LARGE SCALE GENOMIC DNA]</scope>
    <source>
        <strain>C57BL/6J</strain>
    </source>
</reference>
<reference key="2">
    <citation type="journal article" date="2005" name="Science">
        <title>The transcriptional landscape of the mammalian genome.</title>
        <authorList>
            <person name="Carninci P."/>
            <person name="Kasukawa T."/>
            <person name="Katayama S."/>
            <person name="Gough J."/>
            <person name="Frith M.C."/>
            <person name="Maeda N."/>
            <person name="Oyama R."/>
            <person name="Ravasi T."/>
            <person name="Lenhard B."/>
            <person name="Wells C."/>
            <person name="Kodzius R."/>
            <person name="Shimokawa K."/>
            <person name="Bajic V.B."/>
            <person name="Brenner S.E."/>
            <person name="Batalov S."/>
            <person name="Forrest A.R."/>
            <person name="Zavolan M."/>
            <person name="Davis M.J."/>
            <person name="Wilming L.G."/>
            <person name="Aidinis V."/>
            <person name="Allen J.E."/>
            <person name="Ambesi-Impiombato A."/>
            <person name="Apweiler R."/>
            <person name="Aturaliya R.N."/>
            <person name="Bailey T.L."/>
            <person name="Bansal M."/>
            <person name="Baxter L."/>
            <person name="Beisel K.W."/>
            <person name="Bersano T."/>
            <person name="Bono H."/>
            <person name="Chalk A.M."/>
            <person name="Chiu K.P."/>
            <person name="Choudhary V."/>
            <person name="Christoffels A."/>
            <person name="Clutterbuck D.R."/>
            <person name="Crowe M.L."/>
            <person name="Dalla E."/>
            <person name="Dalrymple B.P."/>
            <person name="de Bono B."/>
            <person name="Della Gatta G."/>
            <person name="di Bernardo D."/>
            <person name="Down T."/>
            <person name="Engstrom P."/>
            <person name="Fagiolini M."/>
            <person name="Faulkner G."/>
            <person name="Fletcher C.F."/>
            <person name="Fukushima T."/>
            <person name="Furuno M."/>
            <person name="Futaki S."/>
            <person name="Gariboldi M."/>
            <person name="Georgii-Hemming P."/>
            <person name="Gingeras T.R."/>
            <person name="Gojobori T."/>
            <person name="Green R.E."/>
            <person name="Gustincich S."/>
            <person name="Harbers M."/>
            <person name="Hayashi Y."/>
            <person name="Hensch T.K."/>
            <person name="Hirokawa N."/>
            <person name="Hill D."/>
            <person name="Huminiecki L."/>
            <person name="Iacono M."/>
            <person name="Ikeo K."/>
            <person name="Iwama A."/>
            <person name="Ishikawa T."/>
            <person name="Jakt M."/>
            <person name="Kanapin A."/>
            <person name="Katoh M."/>
            <person name="Kawasawa Y."/>
            <person name="Kelso J."/>
            <person name="Kitamura H."/>
            <person name="Kitano H."/>
            <person name="Kollias G."/>
            <person name="Krishnan S.P."/>
            <person name="Kruger A."/>
            <person name="Kummerfeld S.K."/>
            <person name="Kurochkin I.V."/>
            <person name="Lareau L.F."/>
            <person name="Lazarevic D."/>
            <person name="Lipovich L."/>
            <person name="Liu J."/>
            <person name="Liuni S."/>
            <person name="McWilliam S."/>
            <person name="Madan Babu M."/>
            <person name="Madera M."/>
            <person name="Marchionni L."/>
            <person name="Matsuda H."/>
            <person name="Matsuzawa S."/>
            <person name="Miki H."/>
            <person name="Mignone F."/>
            <person name="Miyake S."/>
            <person name="Morris K."/>
            <person name="Mottagui-Tabar S."/>
            <person name="Mulder N."/>
            <person name="Nakano N."/>
            <person name="Nakauchi H."/>
            <person name="Ng P."/>
            <person name="Nilsson R."/>
            <person name="Nishiguchi S."/>
            <person name="Nishikawa S."/>
            <person name="Nori F."/>
            <person name="Ohara O."/>
            <person name="Okazaki Y."/>
            <person name="Orlando V."/>
            <person name="Pang K.C."/>
            <person name="Pavan W.J."/>
            <person name="Pavesi G."/>
            <person name="Pesole G."/>
            <person name="Petrovsky N."/>
            <person name="Piazza S."/>
            <person name="Reed J."/>
            <person name="Reid J.F."/>
            <person name="Ring B.Z."/>
            <person name="Ringwald M."/>
            <person name="Rost B."/>
            <person name="Ruan Y."/>
            <person name="Salzberg S.L."/>
            <person name="Sandelin A."/>
            <person name="Schneider C."/>
            <person name="Schoenbach C."/>
            <person name="Sekiguchi K."/>
            <person name="Semple C.A."/>
            <person name="Seno S."/>
            <person name="Sessa L."/>
            <person name="Sheng Y."/>
            <person name="Shibata Y."/>
            <person name="Shimada H."/>
            <person name="Shimada K."/>
            <person name="Silva D."/>
            <person name="Sinclair B."/>
            <person name="Sperling S."/>
            <person name="Stupka E."/>
            <person name="Sugiura K."/>
            <person name="Sultana R."/>
            <person name="Takenaka Y."/>
            <person name="Taki K."/>
            <person name="Tammoja K."/>
            <person name="Tan S.L."/>
            <person name="Tang S."/>
            <person name="Taylor M.S."/>
            <person name="Tegner J."/>
            <person name="Teichmann S.A."/>
            <person name="Ueda H.R."/>
            <person name="van Nimwegen E."/>
            <person name="Verardo R."/>
            <person name="Wei C.L."/>
            <person name="Yagi K."/>
            <person name="Yamanishi H."/>
            <person name="Zabarovsky E."/>
            <person name="Zhu S."/>
            <person name="Zimmer A."/>
            <person name="Hide W."/>
            <person name="Bult C."/>
            <person name="Grimmond S.M."/>
            <person name="Teasdale R.D."/>
            <person name="Liu E.T."/>
            <person name="Brusic V."/>
            <person name="Quackenbush J."/>
            <person name="Wahlestedt C."/>
            <person name="Mattick J.S."/>
            <person name="Hume D.A."/>
            <person name="Kai C."/>
            <person name="Sasaki D."/>
            <person name="Tomaru Y."/>
            <person name="Fukuda S."/>
            <person name="Kanamori-Katayama M."/>
            <person name="Suzuki M."/>
            <person name="Aoki J."/>
            <person name="Arakawa T."/>
            <person name="Iida J."/>
            <person name="Imamura K."/>
            <person name="Itoh M."/>
            <person name="Kato T."/>
            <person name="Kawaji H."/>
            <person name="Kawagashira N."/>
            <person name="Kawashima T."/>
            <person name="Kojima M."/>
            <person name="Kondo S."/>
            <person name="Konno H."/>
            <person name="Nakano K."/>
            <person name="Ninomiya N."/>
            <person name="Nishio T."/>
            <person name="Okada M."/>
            <person name="Plessy C."/>
            <person name="Shibata K."/>
            <person name="Shiraki T."/>
            <person name="Suzuki S."/>
            <person name="Tagami M."/>
            <person name="Waki K."/>
            <person name="Watahiki A."/>
            <person name="Okamura-Oho Y."/>
            <person name="Suzuki H."/>
            <person name="Kawai J."/>
            <person name="Hayashizaki Y."/>
        </authorList>
    </citation>
    <scope>NUCLEOTIDE SEQUENCE [LARGE SCALE MRNA] OF 462-908</scope>
    <source>
        <strain>C57BL/6J</strain>
        <tissue>Testis</tissue>
    </source>
</reference>
<reference key="3">
    <citation type="journal article" date="2010" name="Cell">
        <title>A tissue-specific atlas of mouse protein phosphorylation and expression.</title>
        <authorList>
            <person name="Huttlin E.L."/>
            <person name="Jedrychowski M.P."/>
            <person name="Elias J.E."/>
            <person name="Goswami T."/>
            <person name="Rad R."/>
            <person name="Beausoleil S.A."/>
            <person name="Villen J."/>
            <person name="Haas W."/>
            <person name="Sowa M.E."/>
            <person name="Gygi S.P."/>
        </authorList>
    </citation>
    <scope>PHOSPHORYLATION [LARGE SCALE ANALYSIS] AT SER-284</scope>
    <scope>IDENTIFICATION BY MASS SPECTROMETRY [LARGE SCALE ANALYSIS]</scope>
    <source>
        <tissue>Brain</tissue>
        <tissue>Testis</tissue>
    </source>
</reference>
<reference key="4">
    <citation type="journal article" date="2014" name="Genes Cells">
        <title>Oligo-astheno-teratozoospermia in mice lacking ORP4, a sterol-binding protein in the OSBP-related protein family.</title>
        <authorList>
            <person name="Udagawa O."/>
            <person name="Ito C."/>
            <person name="Ogonuki N."/>
            <person name="Sato H."/>
            <person name="Lee S."/>
            <person name="Tripvanuntakul P."/>
            <person name="Ichi I."/>
            <person name="Uchida Y."/>
            <person name="Nishimura T."/>
            <person name="Murakami M."/>
            <person name="Ogura A."/>
            <person name="Inoue T."/>
            <person name="Toshimori K."/>
            <person name="Arai H."/>
        </authorList>
    </citation>
    <scope>FUNCTION</scope>
    <scope>SUBCELLULAR LOCATION</scope>
    <scope>TISSUE SPECIFICITY</scope>
</reference>
<reference key="5">
    <citation type="journal article" date="2024" name="Biol. Reprod.">
        <title>Coiled-coil domain containing 159 is required for spermatid head and tail assembly in mice.</title>
        <authorList>
            <person name="Ge T."/>
            <person name="Yuan L."/>
            <person name="Xu L."/>
            <person name="Yang F."/>
            <person name="Xu W."/>
            <person name="Niu C."/>
            <person name="Li G."/>
            <person name="Zhou H."/>
            <person name="Zheng Y."/>
        </authorList>
    </citation>
    <scope>INTERACTION WITH CCDC159</scope>
</reference>
<sequence length="908" mass="101353">MGKAAALSRGGGCAGRSRGLSSLFTVVPCLSCHTAAPGMNSSAFGSGPASKPQLQPVQAPERELLSKQVCQPISEPASRSEPGSQTTSVPRPSGVGQESELQGLWPGSENGTRSVSIIKASPELAMPSPLQSTVGSLPVTKPESKLVPKTQSFLRQGQAKISVGTPVSGIGVQMVSPPLDSYKGWLLKWTNYLKGYQRRWFVLGNGLLSYYRNQGEMAHTCRATINLASTHFETEDSCGILLCNGARTYHLKASSEVDRQHWITALELAKAKAIRVMKTQSDDSGDDDEEPAAPADNSELHHTLKTLSLKLNDLSTCNDLIAKHGAALQRSLNELDSLKIPSECGEKLKVVNERATLFRITSNAMINACRDFLELAETHSRKWQRALNYEQEQRVHLEETIEQLAKQHNSLERAFCNTPGGPASSSKSFSEGSFLTSKGENSEEDEDTEYFDAMEDSTSFITVVTEAKEDRKPESGPGTTTVDWTSADNVLDGASFMPKNSCKVKRRVRIPDKPNYSLNLWSIMKNCIGRELSRIPMPVNFNEPLSMLQRLTEDLEYHHLLDKAVNCTSSVEQMCLVAAFSVSSYSTTVHRIAKPFNPMLGETFELDRMEDMGLRSLCEQVSHHPPSAAHHVFSKHGWSLWQEITIASKFRGKYISIMPLGAIHLEFQASGNHYVWRKSTSTVHNIIVGKLWIDQSGDIEIVNHKTKDRCQLKFVPYSYFSKEAARKVTGVVSDSQGKAHYVLSGSWDDQMECSKIVHSSPSSDGRQKTVYQTLPAKLLWRKYPLPENAENMYYFSELALTLNEQEDGVAPTDSRLRPDQRLMERGRWDEANTEKQRLEEKQRLSRRRRLESCTAGCGGEEEKESDGYVPLWFEKRLDPLTGEMACMYKGGYWEAKEKKDWHMCPNIF</sequence>
<dbReference type="EMBL" id="AL691413">
    <property type="status" value="NOT_ANNOTATED_CDS"/>
    <property type="molecule type" value="Genomic_DNA"/>
</dbReference>
<dbReference type="EMBL" id="AL731853">
    <property type="status" value="NOT_ANNOTATED_CDS"/>
    <property type="molecule type" value="Genomic_DNA"/>
</dbReference>
<dbReference type="EMBL" id="AK007088">
    <property type="protein sequence ID" value="BAC25163.1"/>
    <property type="molecule type" value="mRNA"/>
</dbReference>
<dbReference type="CCDS" id="CCDS24367.1"/>
<dbReference type="RefSeq" id="NP_690031.2">
    <property type="nucleotide sequence ID" value="NM_152818.2"/>
</dbReference>
<dbReference type="SMR" id="Q5QNQ6"/>
<dbReference type="FunCoup" id="Q5QNQ6">
    <property type="interactions" value="2032"/>
</dbReference>
<dbReference type="STRING" id="10090.ENSMUSP00000068652"/>
<dbReference type="GlyGen" id="Q5QNQ6">
    <property type="glycosylation" value="3 sites, 1 O-linked glycan (2 sites)"/>
</dbReference>
<dbReference type="iPTMnet" id="Q5QNQ6"/>
<dbReference type="PhosphoSitePlus" id="Q5QNQ6"/>
<dbReference type="SwissPalm" id="Q5QNQ6"/>
<dbReference type="PaxDb" id="10090-ENSMUSP00000068652"/>
<dbReference type="PeptideAtlas" id="Q5QNQ6"/>
<dbReference type="ProteomicsDB" id="294120"/>
<dbReference type="Antibodypedia" id="5683">
    <property type="antibodies" value="109 antibodies from 21 providers"/>
</dbReference>
<dbReference type="DNASU" id="74309"/>
<dbReference type="Ensembl" id="ENSMUST00000070552.14">
    <property type="protein sequence ID" value="ENSMUSP00000068652.8"/>
    <property type="gene ID" value="ENSMUSG00000020435.18"/>
</dbReference>
<dbReference type="GeneID" id="74309"/>
<dbReference type="KEGG" id="mmu:74309"/>
<dbReference type="UCSC" id="uc007hto.2">
    <property type="organism name" value="mouse"/>
</dbReference>
<dbReference type="AGR" id="MGI:1921559"/>
<dbReference type="CTD" id="23762"/>
<dbReference type="MGI" id="MGI:1921559">
    <property type="gene designation" value="Osbp2"/>
</dbReference>
<dbReference type="VEuPathDB" id="HostDB:ENSMUSG00000020435"/>
<dbReference type="eggNOG" id="KOG1737">
    <property type="taxonomic scope" value="Eukaryota"/>
</dbReference>
<dbReference type="GeneTree" id="ENSGT00940000157987"/>
<dbReference type="HOGENOM" id="CLU_007105_5_1_1"/>
<dbReference type="InParanoid" id="Q5QNQ6"/>
<dbReference type="OMA" id="LPEMKGW"/>
<dbReference type="OrthoDB" id="14833at2759"/>
<dbReference type="PhylomeDB" id="Q5QNQ6"/>
<dbReference type="TreeFam" id="TF320922"/>
<dbReference type="BioGRID-ORCS" id="74309">
    <property type="hits" value="1 hit in 80 CRISPR screens"/>
</dbReference>
<dbReference type="ChiTaRS" id="Osbp2">
    <property type="organism name" value="mouse"/>
</dbReference>
<dbReference type="PRO" id="PR:Q5QNQ6"/>
<dbReference type="Proteomes" id="UP000000589">
    <property type="component" value="Chromosome 11"/>
</dbReference>
<dbReference type="RNAct" id="Q5QNQ6">
    <property type="molecule type" value="protein"/>
</dbReference>
<dbReference type="Bgee" id="ENSMUSG00000020435">
    <property type="expression patterns" value="Expressed in spermatid and 144 other cell types or tissues"/>
</dbReference>
<dbReference type="ExpressionAtlas" id="Q5QNQ6">
    <property type="expression patterns" value="baseline and differential"/>
</dbReference>
<dbReference type="GO" id="GO:0001669">
    <property type="term" value="C:acrosomal vesicle"/>
    <property type="evidence" value="ECO:0000314"/>
    <property type="project" value="UniProtKB"/>
</dbReference>
<dbReference type="GO" id="GO:0097440">
    <property type="term" value="C:apical dendrite"/>
    <property type="evidence" value="ECO:0000314"/>
    <property type="project" value="MGI"/>
</dbReference>
<dbReference type="GO" id="GO:0016020">
    <property type="term" value="C:membrane"/>
    <property type="evidence" value="ECO:0007669"/>
    <property type="project" value="UniProtKB-SubCell"/>
</dbReference>
<dbReference type="GO" id="GO:0015485">
    <property type="term" value="F:cholesterol binding"/>
    <property type="evidence" value="ECO:0007669"/>
    <property type="project" value="Ensembl"/>
</dbReference>
<dbReference type="GO" id="GO:0006869">
    <property type="term" value="P:lipid transport"/>
    <property type="evidence" value="ECO:0007669"/>
    <property type="project" value="UniProtKB-KW"/>
</dbReference>
<dbReference type="GO" id="GO:0007286">
    <property type="term" value="P:spermatid development"/>
    <property type="evidence" value="ECO:0000315"/>
    <property type="project" value="MGI"/>
</dbReference>
<dbReference type="CDD" id="cd13284">
    <property type="entry name" value="PH_OSBP_ORP4"/>
    <property type="match status" value="1"/>
</dbReference>
<dbReference type="FunFam" id="2.40.160.120:FF:000003">
    <property type="entry name" value="Oxysterol-binding protein"/>
    <property type="match status" value="1"/>
</dbReference>
<dbReference type="Gene3D" id="2.40.160.120">
    <property type="match status" value="1"/>
</dbReference>
<dbReference type="Gene3D" id="2.30.29.30">
    <property type="entry name" value="Pleckstrin-homology domain (PH domain)/Phosphotyrosine-binding domain (PTB)"/>
    <property type="match status" value="1"/>
</dbReference>
<dbReference type="InterPro" id="IPR037239">
    <property type="entry name" value="OSBP_sf"/>
</dbReference>
<dbReference type="InterPro" id="IPR000648">
    <property type="entry name" value="Oxysterol-bd"/>
</dbReference>
<dbReference type="InterPro" id="IPR018494">
    <property type="entry name" value="Oxysterol-bd_CS"/>
</dbReference>
<dbReference type="InterPro" id="IPR011993">
    <property type="entry name" value="PH-like_dom_sf"/>
</dbReference>
<dbReference type="InterPro" id="IPR001849">
    <property type="entry name" value="PH_domain"/>
</dbReference>
<dbReference type="PANTHER" id="PTHR10972:SF194">
    <property type="entry name" value="OXYSTEROL-BINDING PROTEIN 2"/>
    <property type="match status" value="1"/>
</dbReference>
<dbReference type="PANTHER" id="PTHR10972">
    <property type="entry name" value="OXYSTEROL-BINDING PROTEIN-RELATED"/>
    <property type="match status" value="1"/>
</dbReference>
<dbReference type="Pfam" id="PF01237">
    <property type="entry name" value="Oxysterol_BP"/>
    <property type="match status" value="1"/>
</dbReference>
<dbReference type="Pfam" id="PF00169">
    <property type="entry name" value="PH"/>
    <property type="match status" value="1"/>
</dbReference>
<dbReference type="SMART" id="SM00233">
    <property type="entry name" value="PH"/>
    <property type="match status" value="1"/>
</dbReference>
<dbReference type="SUPFAM" id="SSF144000">
    <property type="entry name" value="Oxysterol-binding protein-like"/>
    <property type="match status" value="1"/>
</dbReference>
<dbReference type="SUPFAM" id="SSF50729">
    <property type="entry name" value="PH domain-like"/>
    <property type="match status" value="1"/>
</dbReference>
<dbReference type="PROSITE" id="PS01013">
    <property type="entry name" value="OSBP"/>
    <property type="match status" value="1"/>
</dbReference>
<dbReference type="PROSITE" id="PS50003">
    <property type="entry name" value="PH_DOMAIN"/>
    <property type="match status" value="1"/>
</dbReference>
<accession>Q5QNQ6</accession>
<accession>Q8CF21</accession>
<gene>
    <name type="primary">Osbp2</name>
    <name evidence="6" type="synonym">orp4</name>
</gene>
<feature type="chain" id="PRO_0000223481" description="Oxysterol-binding protein 2">
    <location>
        <begin position="1"/>
        <end position="908"/>
    </location>
</feature>
<feature type="domain" description="PH" evidence="2">
    <location>
        <begin position="179"/>
        <end position="271"/>
    </location>
</feature>
<feature type="region of interest" description="Disordered" evidence="3">
    <location>
        <begin position="42"/>
        <end position="112"/>
    </location>
</feature>
<feature type="region of interest" description="Disordered" evidence="3">
    <location>
        <begin position="279"/>
        <end position="299"/>
    </location>
</feature>
<feature type="region of interest" description="Disordered" evidence="3">
    <location>
        <begin position="413"/>
        <end position="445"/>
    </location>
</feature>
<feature type="region of interest" description="Disordered" evidence="3">
    <location>
        <begin position="822"/>
        <end position="843"/>
    </location>
</feature>
<feature type="compositionally biased region" description="Polar residues" evidence="3">
    <location>
        <begin position="81"/>
        <end position="90"/>
    </location>
</feature>
<feature type="compositionally biased region" description="Low complexity" evidence="3">
    <location>
        <begin position="424"/>
        <end position="437"/>
    </location>
</feature>
<feature type="modified residue" description="Phosphoserine" evidence="8">
    <location>
        <position position="284"/>
    </location>
</feature>
<proteinExistence type="evidence at protein level"/>
<protein>
    <recommendedName>
        <fullName>Oxysterol-binding protein 2</fullName>
    </recommendedName>
</protein>
<evidence type="ECO:0000250" key="1">
    <source>
        <dbReference type="UniProtKB" id="Q969R2"/>
    </source>
</evidence>
<evidence type="ECO:0000255" key="2">
    <source>
        <dbReference type="PROSITE-ProRule" id="PRU00145"/>
    </source>
</evidence>
<evidence type="ECO:0000256" key="3">
    <source>
        <dbReference type="SAM" id="MobiDB-lite"/>
    </source>
</evidence>
<evidence type="ECO:0000269" key="4">
    <source>
    </source>
</evidence>
<evidence type="ECO:0000269" key="5">
    <source>
    </source>
</evidence>
<evidence type="ECO:0000303" key="6">
    <source>
    </source>
</evidence>
<evidence type="ECO:0000305" key="7"/>
<evidence type="ECO:0007744" key="8">
    <source>
    </source>
</evidence>
<comment type="function">
    <text evidence="1 4">Binds 7-ketocholesterol (By similarity). Acts during spermatid development where its function is required prior to the removal of cytoplasm from the sperm head (PubMed:24245814).</text>
</comment>
<comment type="subunit">
    <text evidence="5">Interacts with CCDC159.</text>
</comment>
<comment type="subcellular location">
    <subcellularLocation>
        <location evidence="1">Membrane</location>
        <topology evidence="1">Peripheral membrane protein</topology>
    </subcellularLocation>
    <subcellularLocation>
        <location evidence="4">Cytoplasmic vesicle</location>
        <location evidence="4">Secretory vesicle</location>
        <location evidence="4">Acrosome</location>
    </subcellularLocation>
    <text evidence="4">Localizes to the equatorial segment of the acrosome following cytoplasmic removal in the developing spermatid.</text>
</comment>
<comment type="tissue specificity">
    <text evidence="4">Expressed in the testis (at protein level) (PubMed:24245814). Expressed in postmeiotic germ cells of the testis (PubMed:24245814).</text>
</comment>
<comment type="similarity">
    <text evidence="7">Belongs to the OSBP family.</text>
</comment>